<gene>
    <name evidence="1" type="primary">NP</name>
</gene>
<feature type="chain" id="PRO_0000079124" description="Nucleoprotein">
    <location>
        <begin position="1"/>
        <end position="498"/>
    </location>
</feature>
<feature type="region of interest" description="Disordered" evidence="2">
    <location>
        <begin position="1"/>
        <end position="23"/>
    </location>
</feature>
<feature type="short sequence motif" description="Unconventional nuclear localization signal" evidence="1">
    <location>
        <begin position="1"/>
        <end position="18"/>
    </location>
</feature>
<feature type="short sequence motif" description="Bipartite nuclear localization signal" evidence="1">
    <location>
        <begin position="198"/>
        <end position="216"/>
    </location>
</feature>
<protein>
    <recommendedName>
        <fullName evidence="1">Nucleoprotein</fullName>
    </recommendedName>
    <alternativeName>
        <fullName evidence="1">Nucleocapsid protein</fullName>
        <shortName evidence="1">Protein N</shortName>
    </alternativeName>
</protein>
<sequence>MASQGTKRSYEQMETGGERQNTTEIRASVGRMIGGIGRFYIQMCTELKLSDYEGRLIQNSITIERMVLSAFDERRNKYLEEHPSAGKDPKKTGGPIYRRIDGKWIRELILYDKEEISRIWRQANNGEDATAGLTHMMIWHSNLNDATYQRTRALVRTGMDPRMCSLMQGSTLPRRSGAAGAAVKGVGTMVMELIRMIKRGINDRNFWRGENGRRTRIAYERMCNILKGKFQTAAQKAMMDQVRESRNPGNAEIEDLIFLARSALILRGSVAHKSCLPACVYGLAVASGHDFEREGYSLVGIDPFRLLQNSQVFSLIRPNENPAHKSQLVWMACHSAAFEDLRVSSFIRGKRVVPRGQLSTRGVQIASNENMETMDSSTLELRSRYWAIRTRSGGNTNQQRASAGQISVQPTFSVQRNLPFERATIMAAFTGNTEGRTSDMRTEIIRIMESARPEDVSFQGRGVFELSDEKATSPIVPSFDMSNEGSYFFGDNAEEYDN</sequence>
<accession>P16988</accession>
<comment type="function">
    <text evidence="1">Encapsidates the negative strand viral RNA, protecting it from nucleases. The encapsidated genomic RNA is termed the ribonucleoprotein (RNP) and serves as template for transcription and replication. The RNP needs to be localized in the host nucleus to start an infectious cycle, but is too large to diffuse through the nuclear pore complex. NP comprises at least 2 nuclear localization signals that are responsible for the active RNP import into the nucleus through cellular importin alpha/beta pathway. Later in the infection, nclear export of RNPs are mediated through viral proteins NEP interacting with M1 which binds nucleoproteins. It is possible that nucleoprotein binds directly host exportin-1/XPO1 and plays an active role in RNPs nuclear export. M1 interaction with RNP seems to hide nucleoprotein's nuclear localization signals. Soon after a virion infects a new cell, M1 dissociates from the RNP under acidification of the virion driven by M2 protein. Dissociation of M1 from RNP unmasks nucleoprotein's nuclear localization signals, targeting the RNP to the nucleus.</text>
</comment>
<comment type="subunit">
    <text evidence="1">Homomultimerizes to form the nucleocapsid. May bind host exportin-1/XPO1. Binds to viral genomic RNA. Protein-RNA contacts are mediated by a combination of electrostatic interactions between positively charged residues and the phosphate backbone and planar interactions between aromatic side chains and bases.</text>
</comment>
<comment type="subcellular location">
    <subcellularLocation>
        <location evidence="1">Virion</location>
    </subcellularLocation>
    <subcellularLocation>
        <location evidence="1">Host nucleus</location>
    </subcellularLocation>
</comment>
<comment type="PTM">
    <text evidence="1">Late in virus-infected cells, may be cleaved from a 56-kDa protein to a 53-kDa protein by a cellular caspase. This cleavage might be a marker for the onset of apoptosis in infected cells or have a specific function in virus host interaction.</text>
</comment>
<comment type="similarity">
    <text evidence="1">Belongs to the influenza viruses nucleoprotein family.</text>
</comment>
<reference key="1">
    <citation type="journal article" date="1989" name="Virology">
        <title>Two subtypes of nucleoproteins (NP) of influenza A viruses.</title>
        <authorList>
            <person name="Gammelin M."/>
            <person name="Mandler J."/>
            <person name="Scholtissek C."/>
        </authorList>
    </citation>
    <scope>NUCLEOTIDE SEQUENCE [GENOMIC RNA]</scope>
</reference>
<keyword id="KW-0167">Capsid protein</keyword>
<keyword id="KW-1139">Helical capsid protein</keyword>
<keyword id="KW-1048">Host nucleus</keyword>
<keyword id="KW-0945">Host-virus interaction</keyword>
<keyword id="KW-0687">Ribonucleoprotein</keyword>
<keyword id="KW-0694">RNA-binding</keyword>
<keyword id="KW-0543">Viral nucleoprotein</keyword>
<keyword id="KW-1163">Viral penetration into host nucleus</keyword>
<keyword id="KW-0946">Virion</keyword>
<keyword id="KW-1160">Virus entry into host cell</keyword>
<name>NCAP_I76AF</name>
<organism>
    <name type="scientific">Influenza A virus (strain A/Swine/Iowa/1976/1931 H1N1)</name>
    <dbReference type="NCBI Taxonomy" id="384482"/>
    <lineage>
        <taxon>Viruses</taxon>
        <taxon>Riboviria</taxon>
        <taxon>Orthornavirae</taxon>
        <taxon>Negarnaviricota</taxon>
        <taxon>Polyploviricotina</taxon>
        <taxon>Insthoviricetes</taxon>
        <taxon>Articulavirales</taxon>
        <taxon>Orthomyxoviridae</taxon>
        <taxon>Alphainfluenzavirus</taxon>
        <taxon>Alphainfluenzavirus influenzae</taxon>
        <taxon>Influenza A virus</taxon>
    </lineage>
</organism>
<proteinExistence type="inferred from homology"/>
<dbReference type="EMBL" id="M22578">
    <property type="protein sequence ID" value="AAA43676.1"/>
    <property type="molecule type" value="Genomic_RNA"/>
</dbReference>
<dbReference type="SMR" id="P16988"/>
<dbReference type="GO" id="GO:0019029">
    <property type="term" value="C:helical viral capsid"/>
    <property type="evidence" value="ECO:0007669"/>
    <property type="project" value="UniProtKB-UniRule"/>
</dbReference>
<dbReference type="GO" id="GO:0043657">
    <property type="term" value="C:host cell"/>
    <property type="evidence" value="ECO:0007669"/>
    <property type="project" value="GOC"/>
</dbReference>
<dbReference type="GO" id="GO:0042025">
    <property type="term" value="C:host cell nucleus"/>
    <property type="evidence" value="ECO:0007669"/>
    <property type="project" value="UniProtKB-SubCell"/>
</dbReference>
<dbReference type="GO" id="GO:1990904">
    <property type="term" value="C:ribonucleoprotein complex"/>
    <property type="evidence" value="ECO:0007669"/>
    <property type="project" value="UniProtKB-KW"/>
</dbReference>
<dbReference type="GO" id="GO:0019013">
    <property type="term" value="C:viral nucleocapsid"/>
    <property type="evidence" value="ECO:0007669"/>
    <property type="project" value="UniProtKB-UniRule"/>
</dbReference>
<dbReference type="GO" id="GO:0003723">
    <property type="term" value="F:RNA binding"/>
    <property type="evidence" value="ECO:0007669"/>
    <property type="project" value="UniProtKB-UniRule"/>
</dbReference>
<dbReference type="GO" id="GO:0005198">
    <property type="term" value="F:structural molecule activity"/>
    <property type="evidence" value="ECO:0007669"/>
    <property type="project" value="UniProtKB-UniRule"/>
</dbReference>
<dbReference type="GO" id="GO:0046718">
    <property type="term" value="P:symbiont entry into host cell"/>
    <property type="evidence" value="ECO:0007669"/>
    <property type="project" value="UniProtKB-KW"/>
</dbReference>
<dbReference type="GO" id="GO:0075732">
    <property type="term" value="P:viral penetration into host nucleus"/>
    <property type="evidence" value="ECO:0007669"/>
    <property type="project" value="UniProtKB-UniRule"/>
</dbReference>
<dbReference type="HAMAP" id="MF_04070">
    <property type="entry name" value="INFV_NCAP"/>
    <property type="match status" value="1"/>
</dbReference>
<dbReference type="InterPro" id="IPR002141">
    <property type="entry name" value="Flu_NP"/>
</dbReference>
<dbReference type="Pfam" id="PF00506">
    <property type="entry name" value="Flu_NP"/>
    <property type="match status" value="1"/>
</dbReference>
<dbReference type="SUPFAM" id="SSF161003">
    <property type="entry name" value="flu NP-like"/>
    <property type="match status" value="1"/>
</dbReference>
<organismHost>
    <name type="scientific">Aves</name>
    <dbReference type="NCBI Taxonomy" id="8782"/>
</organismHost>
<organismHost>
    <name type="scientific">Homo sapiens</name>
    <name type="common">Human</name>
    <dbReference type="NCBI Taxonomy" id="9606"/>
</organismHost>
<organismHost>
    <name type="scientific">Sus scrofa</name>
    <name type="common">Pig</name>
    <dbReference type="NCBI Taxonomy" id="9823"/>
</organismHost>
<evidence type="ECO:0000255" key="1">
    <source>
        <dbReference type="HAMAP-Rule" id="MF_04070"/>
    </source>
</evidence>
<evidence type="ECO:0000256" key="2">
    <source>
        <dbReference type="SAM" id="MobiDB-lite"/>
    </source>
</evidence>